<comment type="catalytic activity">
    <reaction evidence="1">
        <text>L-tryptophan + H2O = indole + pyruvate + NH4(+)</text>
        <dbReference type="Rhea" id="RHEA:19553"/>
        <dbReference type="ChEBI" id="CHEBI:15361"/>
        <dbReference type="ChEBI" id="CHEBI:15377"/>
        <dbReference type="ChEBI" id="CHEBI:16881"/>
        <dbReference type="ChEBI" id="CHEBI:28938"/>
        <dbReference type="ChEBI" id="CHEBI:57912"/>
        <dbReference type="EC" id="4.1.99.1"/>
    </reaction>
</comment>
<comment type="cofactor">
    <cofactor evidence="1">
        <name>pyridoxal 5'-phosphate</name>
        <dbReference type="ChEBI" id="CHEBI:597326"/>
    </cofactor>
</comment>
<comment type="pathway">
    <text evidence="1">Amino-acid degradation; L-tryptophan degradation via pyruvate pathway; indole and pyruvate from L-tryptophan: step 1/1.</text>
</comment>
<comment type="subunit">
    <text evidence="1">Homotetramer.</text>
</comment>
<comment type="similarity">
    <text evidence="1">Belongs to the beta-eliminating lyase family.</text>
</comment>
<protein>
    <recommendedName>
        <fullName evidence="1">Tryptophanase</fullName>
        <ecNumber evidence="1">4.1.99.1</ecNumber>
    </recommendedName>
    <alternativeName>
        <fullName evidence="1">L-tryptophan indole-lyase</fullName>
        <shortName evidence="1">TNase</shortName>
    </alternativeName>
</protein>
<evidence type="ECO:0000255" key="1">
    <source>
        <dbReference type="HAMAP-Rule" id="MF_00544"/>
    </source>
</evidence>
<name>TNAA_ECOLC</name>
<accession>B1IX30</accession>
<keyword id="KW-0007">Acetylation</keyword>
<keyword id="KW-0456">Lyase</keyword>
<keyword id="KW-0663">Pyridoxal phosphate</keyword>
<keyword id="KW-0823">Tryptophan catabolism</keyword>
<reference key="1">
    <citation type="submission" date="2008-02" db="EMBL/GenBank/DDBJ databases">
        <title>Complete sequence of Escherichia coli C str. ATCC 8739.</title>
        <authorList>
            <person name="Copeland A."/>
            <person name="Lucas S."/>
            <person name="Lapidus A."/>
            <person name="Glavina del Rio T."/>
            <person name="Dalin E."/>
            <person name="Tice H."/>
            <person name="Bruce D."/>
            <person name="Goodwin L."/>
            <person name="Pitluck S."/>
            <person name="Kiss H."/>
            <person name="Brettin T."/>
            <person name="Detter J.C."/>
            <person name="Han C."/>
            <person name="Kuske C.R."/>
            <person name="Schmutz J."/>
            <person name="Larimer F."/>
            <person name="Land M."/>
            <person name="Hauser L."/>
            <person name="Kyrpides N."/>
            <person name="Mikhailova N."/>
            <person name="Ingram L."/>
            <person name="Richardson P."/>
        </authorList>
    </citation>
    <scope>NUCLEOTIDE SEQUENCE [LARGE SCALE GENOMIC DNA]</scope>
    <source>
        <strain>ATCC 8739 / DSM 1576 / NBRC 3972 / NCIMB 8545 / WDCM 00012 / Crooks</strain>
    </source>
</reference>
<proteinExistence type="inferred from homology"/>
<gene>
    <name evidence="1" type="primary">tnaA</name>
    <name type="ordered locus">EcolC_4286</name>
</gene>
<sequence length="471" mass="52773">MENFKHLPEPFRIRVIEPVKRTTRAYREEAIIKSGMNPFLLDSEDVFIDLLTDSGTGAVTQSMQAAMMRGDEAYSGSRSYYALAESVKNIFGYQYTIPTHQGRGAEQIYIPVLIKKREQEKGLDRSKMVAFSNYFFDTTQGHSQINGCTVRNVYIKEAFDTGVRYDFKGNFDLEGLERGIEEVGPNNVPYIVATITSNSAGGQPVSLANLKAMYSIAKKYDIPVVMDSARFAENAYFIKQREAEYKDWTIEQITRETYKYADMLAMSAKKDAMVPMGGLLCMKDDSFFDVYTECRTLCVVQEGFPTYGGLEGGAMERLAVGLYDGMNLDWLAYRIAQVQYLVDGLEEIGVVCQQAGGHAAFVDAGKLLPHIPADQFPAQALACELYKVAGIRAVEIGSFLLGRDPKTGKQLPCPAELLRLTIPRATYTQTHMDFIIEAFKHVKENAANIKGLTFTYEPKVLRHFTAKLKEV</sequence>
<dbReference type="EC" id="4.1.99.1" evidence="1"/>
<dbReference type="EMBL" id="CP000946">
    <property type="protein sequence ID" value="ACA79882.1"/>
    <property type="molecule type" value="Genomic_DNA"/>
</dbReference>
<dbReference type="RefSeq" id="WP_001295247.1">
    <property type="nucleotide sequence ID" value="NZ_MTFT01000013.1"/>
</dbReference>
<dbReference type="SMR" id="B1IX30"/>
<dbReference type="GeneID" id="75205423"/>
<dbReference type="KEGG" id="ecl:EcolC_4286"/>
<dbReference type="HOGENOM" id="CLU_047223_0_0_6"/>
<dbReference type="UniPathway" id="UPA00332">
    <property type="reaction ID" value="UER00452"/>
</dbReference>
<dbReference type="GO" id="GO:0009034">
    <property type="term" value="F:tryptophanase activity"/>
    <property type="evidence" value="ECO:0007669"/>
    <property type="project" value="UniProtKB-UniRule"/>
</dbReference>
<dbReference type="FunFam" id="3.40.640.10:FF:000039">
    <property type="entry name" value="Tryptophanase"/>
    <property type="match status" value="1"/>
</dbReference>
<dbReference type="Gene3D" id="3.90.1150.10">
    <property type="entry name" value="Aspartate Aminotransferase, domain 1"/>
    <property type="match status" value="1"/>
</dbReference>
<dbReference type="Gene3D" id="3.40.640.10">
    <property type="entry name" value="Type I PLP-dependent aspartate aminotransferase-like (Major domain)"/>
    <property type="match status" value="1"/>
</dbReference>
<dbReference type="HAMAP" id="MF_00544">
    <property type="entry name" value="Tryptophanase"/>
    <property type="match status" value="1"/>
</dbReference>
<dbReference type="InterPro" id="IPR001597">
    <property type="entry name" value="ArAA_b-elim_lyase/Thr_aldolase"/>
</dbReference>
<dbReference type="InterPro" id="IPR011166">
    <property type="entry name" value="Beta-eliminating_lyase"/>
</dbReference>
<dbReference type="InterPro" id="IPR015424">
    <property type="entry name" value="PyrdxlP-dep_Trfase"/>
</dbReference>
<dbReference type="InterPro" id="IPR015421">
    <property type="entry name" value="PyrdxlP-dep_Trfase_major"/>
</dbReference>
<dbReference type="InterPro" id="IPR015422">
    <property type="entry name" value="PyrdxlP-dep_Trfase_small"/>
</dbReference>
<dbReference type="InterPro" id="IPR013440">
    <property type="entry name" value="TNase"/>
</dbReference>
<dbReference type="InterPro" id="IPR018176">
    <property type="entry name" value="Tryptophanase_CS"/>
</dbReference>
<dbReference type="NCBIfam" id="NF009709">
    <property type="entry name" value="PRK13238.1"/>
    <property type="match status" value="1"/>
</dbReference>
<dbReference type="NCBIfam" id="TIGR02617">
    <property type="entry name" value="tnaA_trp_ase"/>
    <property type="match status" value="1"/>
</dbReference>
<dbReference type="PANTHER" id="PTHR32325">
    <property type="entry name" value="BETA-ELIMINATING LYASE-LIKE PROTEIN-RELATED"/>
    <property type="match status" value="1"/>
</dbReference>
<dbReference type="PANTHER" id="PTHR32325:SF4">
    <property type="entry name" value="TRYPTOPHANASE"/>
    <property type="match status" value="1"/>
</dbReference>
<dbReference type="Pfam" id="PF01212">
    <property type="entry name" value="Beta_elim_lyase"/>
    <property type="match status" value="1"/>
</dbReference>
<dbReference type="PIRSF" id="PIRSF001386">
    <property type="entry name" value="Trpase"/>
    <property type="match status" value="1"/>
</dbReference>
<dbReference type="SUPFAM" id="SSF53383">
    <property type="entry name" value="PLP-dependent transferases"/>
    <property type="match status" value="1"/>
</dbReference>
<dbReference type="PROSITE" id="PS00853">
    <property type="entry name" value="BETA_ELIM_LYASE"/>
    <property type="match status" value="1"/>
</dbReference>
<feature type="chain" id="PRO_1000081941" description="Tryptophanase">
    <location>
        <begin position="1"/>
        <end position="471"/>
    </location>
</feature>
<feature type="modified residue" description="N6-acetyllysine" evidence="1">
    <location>
        <position position="5"/>
    </location>
</feature>
<feature type="modified residue" description="N6-acetyllysine" evidence="1">
    <location>
        <position position="115"/>
    </location>
</feature>
<feature type="modified residue" description="N6-acetyllysine" evidence="1">
    <location>
        <position position="156"/>
    </location>
</feature>
<feature type="modified residue" description="N6-(pyridoxal phosphate)lysine" evidence="1">
    <location>
        <position position="270"/>
    </location>
</feature>
<feature type="modified residue" description="N6-acetyllysine" evidence="1">
    <location>
        <position position="450"/>
    </location>
</feature>
<organism>
    <name type="scientific">Escherichia coli (strain ATCC 8739 / DSM 1576 / NBRC 3972 / NCIMB 8545 / WDCM 00012 / Crooks)</name>
    <dbReference type="NCBI Taxonomy" id="481805"/>
    <lineage>
        <taxon>Bacteria</taxon>
        <taxon>Pseudomonadati</taxon>
        <taxon>Pseudomonadota</taxon>
        <taxon>Gammaproteobacteria</taxon>
        <taxon>Enterobacterales</taxon>
        <taxon>Enterobacteriaceae</taxon>
        <taxon>Escherichia</taxon>
    </lineage>
</organism>